<keyword id="KW-0002">3D-structure</keyword>
<keyword id="KW-0968">Cytoplasmic vesicle</keyword>
<keyword id="KW-1015">Disulfide bond</keyword>
<keyword id="KW-0256">Endoplasmic reticulum</keyword>
<keyword id="KW-0967">Endosome</keyword>
<keyword id="KW-0269">Exonuclease</keyword>
<keyword id="KW-0325">Glycoprotein</keyword>
<keyword id="KW-0333">Golgi apparatus</keyword>
<keyword id="KW-0378">Hydrolase</keyword>
<keyword id="KW-0391">Immunity</keyword>
<keyword id="KW-0395">Inflammatory response</keyword>
<keyword id="KW-0399">Innate immunity</keyword>
<keyword id="KW-0443">Lipid metabolism</keyword>
<keyword id="KW-0458">Lysosome</keyword>
<keyword id="KW-0472">Membrane</keyword>
<keyword id="KW-0540">Nuclease</keyword>
<keyword id="KW-0539">Nucleus</keyword>
<keyword id="KW-1208">Phospholipid metabolism</keyword>
<keyword id="KW-1267">Proteomics identification</keyword>
<keyword id="KW-1185">Reference proteome</keyword>
<keyword id="KW-0677">Repeat</keyword>
<keyword id="KW-0735">Signal-anchor</keyword>
<keyword id="KW-0812">Transmembrane</keyword>
<keyword id="KW-1133">Transmembrane helix</keyword>
<feature type="chain" id="PRO_0000280333" description="5'-3' exonuclease PLD4">
    <location>
        <begin position="1"/>
        <end position="506"/>
    </location>
</feature>
<feature type="transmembrane region" description="Helical" evidence="3">
    <location>
        <begin position="31"/>
        <end position="51"/>
    </location>
</feature>
<feature type="domain" description="PLD phosphodiesterase 1" evidence="4">
    <location>
        <begin position="209"/>
        <end position="236"/>
    </location>
</feature>
<feature type="domain" description="PLD phosphodiesterase 2" evidence="4">
    <location>
        <begin position="423"/>
        <end position="449"/>
    </location>
</feature>
<feature type="active site" description="Proton donor" evidence="4 15">
    <location>
        <position position="214"/>
    </location>
</feature>
<feature type="active site" evidence="4">
    <location>
        <position position="216"/>
    </location>
</feature>
<feature type="active site" evidence="4">
    <location>
        <position position="221"/>
    </location>
</feature>
<feature type="active site" description="Nucleophile" evidence="15">
    <location>
        <position position="428"/>
    </location>
</feature>
<feature type="glycosylation site" description="N-linked (GlcNAc...) asparagine" evidence="5">
    <location>
        <position position="150"/>
    </location>
</feature>
<feature type="glycosylation site" description="N-linked (GlcNAc...) asparagine" evidence="5">
    <location>
        <position position="171"/>
    </location>
</feature>
<feature type="glycosylation site" description="N-linked (GlcNAc...) asparagine" evidence="5">
    <location>
        <position position="249"/>
    </location>
</feature>
<feature type="glycosylation site" description="N-linked (GlcNAc...) asparagine" evidence="5">
    <location>
        <position position="281"/>
    </location>
</feature>
<feature type="glycosylation site" description="N-linked (GlcNAc...) asparagine" evidence="5">
    <location>
        <position position="403"/>
    </location>
</feature>
<feature type="glycosylation site" description="N-linked (GlcNAc...) asparagine" evidence="5">
    <location>
        <position position="417"/>
    </location>
</feature>
<feature type="glycosylation site" description="N-linked (GlcNAc...) asparagine" evidence="5">
    <location>
        <position position="427"/>
    </location>
</feature>
<feature type="glycosylation site" description="N-linked (GlcNAc...) asparagine" evidence="5">
    <location>
        <position position="444"/>
    </location>
</feature>
<feature type="disulfide bond" evidence="8 18">
    <location>
        <begin position="94"/>
        <end position="250"/>
    </location>
</feature>
<feature type="disulfide bond" evidence="8 18">
    <location>
        <begin position="379"/>
        <end position="502"/>
    </location>
</feature>
<feature type="sequence variant" id="VAR_061751" description="In dbSNP:rs894037.">
    <original>C</original>
    <variation>R</variation>
    <location>
        <position position="16"/>
    </location>
</feature>
<feature type="sequence variant" id="VAR_031119" description="In dbSNP:rs2841280.">
    <original>E</original>
    <variation>Q</variation>
    <location>
        <position position="27"/>
    </location>
</feature>
<feature type="sequence variant" id="VAR_031120" description="In dbSNP:rs3803295.">
    <original>V</original>
    <variation>M</variation>
    <location>
        <position position="135"/>
    </location>
</feature>
<feature type="mutagenesis site" description="Loss of exonuclease activity toward ssDNA substrate." evidence="8">
    <original>L</original>
    <variation>G</variation>
    <location>
        <position position="183"/>
    </location>
</feature>
<feature type="mutagenesis site" description="Loss of exonuclease activity toward ssDNA substrate; when associated with A-348." evidence="8">
    <original>V</original>
    <variation>A</variation>
    <location>
        <position position="212"/>
    </location>
</feature>
<feature type="mutagenesis site" description="Loss of exonuclease and phosphatase activities toward ssDNA; when associated with A-414. Loss of (S,S)-BMP synthase activity. No effect on protein expression or localization to lysosomes." evidence="8 10">
    <original>H</original>
    <variation>A</variation>
    <location>
        <position position="214"/>
    </location>
</feature>
<feature type="mutagenesis site" description="Loss of (S,S)-BMP synthase activity. No effect on protein expression or localization to lysosomes." evidence="10">
    <original>K</original>
    <variation>A</variation>
    <location>
        <position position="216"/>
    </location>
</feature>
<feature type="mutagenesis site" description="Loss of (S,S)-BMP synthase activity. No effect on protein expression or localization to lysosomes. Loss of protein stability; when associated with A-435." evidence="8 10">
    <original>D</original>
    <variation>A</variation>
    <location>
        <position position="221"/>
    </location>
</feature>
<feature type="mutagenesis site" description="Tends to form aggregates. Loss of exonuclease activity toward ssDNA substrate." evidence="8">
    <original>R</original>
    <variation>Q</variation>
    <location>
        <position position="235"/>
    </location>
</feature>
<feature type="mutagenesis site" description="No effect on exonuclease activity toward ssDNA substrate." evidence="8">
    <original>H</original>
    <variation>Q</variation>
    <location>
        <position position="252"/>
    </location>
</feature>
<feature type="mutagenesis site" description="No effect on exonuclease activity toward ssDNA substrate." evidence="8">
    <original>Q</original>
    <variation>L</variation>
    <location>
        <position position="255"/>
    </location>
</feature>
<feature type="mutagenesis site" description="Tends to form aggregates. Decreases exonuclease activity toward ssDNA substrate." evidence="8">
    <original>S</original>
    <variation>L</variation>
    <location>
        <position position="283"/>
    </location>
</feature>
<feature type="mutagenesis site" description="No effect on exonuclease activity toward ssDNA substrate." evidence="8">
    <original>A</original>
    <variation>V</variation>
    <location>
        <position position="326"/>
    </location>
</feature>
<feature type="mutagenesis site" description="Loss of exonuclease activity toward ssDNA; when associated with A-212." evidence="8">
    <original>F</original>
    <variation>A</variation>
    <location>
        <position position="348"/>
    </location>
</feature>
<feature type="mutagenesis site" description="Increases exonuclease activity toward ssDNA substrate." evidence="8">
    <original>G</original>
    <variation>S</variation>
    <location>
        <position position="368"/>
    </location>
</feature>
<feature type="mutagenesis site" description="Loss of (S,S)-BMP synthase activity. No effect on protein expression or localization to lysosomes." evidence="10">
    <original>V</original>
    <variation>A</variation>
    <location>
        <position position="426"/>
    </location>
</feature>
<feature type="mutagenesis site" description="Loss of exonuclease and phosphatase activities; when associated with A-414. Loss of (S,S)-BMP synthase activity. No effect on protein expression or localization to lysosomes." evidence="8 10">
    <original>H</original>
    <variation>A</variation>
    <location>
        <position position="428"/>
    </location>
</feature>
<feature type="mutagenesis site" description="Loss of (S,S)-BMP synthase activity. No effect on protein expression or localization to lysosomes. Loss of protein stability; when associated with A-221." evidence="8 10">
    <original>E</original>
    <variation>A</variation>
    <location>
        <position position="435"/>
    </location>
</feature>
<feature type="mutagenesis site" description="No effect on (S,S)-BMP synthase activity, protein expression or localization to lysosomes." evidence="10">
    <original>E</original>
    <variation>D</variation>
    <location>
        <position position="435"/>
    </location>
</feature>
<feature type="mutagenesis site" description="No effect on exonuclease activity toward ssDNA substrate." evidence="8">
    <original>A</original>
    <variation>V</variation>
    <location>
        <position position="497"/>
    </location>
</feature>
<feature type="strand" evidence="19">
    <location>
        <begin position="95"/>
        <end position="101"/>
    </location>
</feature>
<feature type="helix" evidence="19">
    <location>
        <begin position="118"/>
        <end position="128"/>
    </location>
</feature>
<feature type="strand" evidence="19">
    <location>
        <begin position="133"/>
        <end position="136"/>
    </location>
</feature>
<feature type="turn" evidence="19">
    <location>
        <begin position="145"/>
        <end position="147"/>
    </location>
</feature>
<feature type="helix" evidence="19">
    <location>
        <begin position="154"/>
        <end position="169"/>
    </location>
</feature>
<feature type="strand" evidence="19">
    <location>
        <begin position="175"/>
        <end position="179"/>
    </location>
</feature>
<feature type="helix" evidence="19">
    <location>
        <begin position="189"/>
        <end position="194"/>
    </location>
</feature>
<feature type="turn" evidence="19">
    <location>
        <begin position="195"/>
        <end position="197"/>
    </location>
</feature>
<feature type="strand" evidence="19">
    <location>
        <begin position="199"/>
        <end position="202"/>
    </location>
</feature>
<feature type="helix" evidence="19">
    <location>
        <begin position="205"/>
        <end position="209"/>
    </location>
</feature>
<feature type="strand" evidence="19">
    <location>
        <begin position="217"/>
        <end position="220"/>
    </location>
</feature>
<feature type="turn" evidence="19">
    <location>
        <begin position="221"/>
        <end position="223"/>
    </location>
</feature>
<feature type="strand" evidence="19">
    <location>
        <begin position="224"/>
        <end position="229"/>
    </location>
</feature>
<feature type="strand" evidence="19">
    <location>
        <begin position="232"/>
        <end position="234"/>
    </location>
</feature>
<feature type="helix" evidence="19">
    <location>
        <begin position="235"/>
        <end position="238"/>
    </location>
</feature>
<feature type="strand" evidence="19">
    <location>
        <begin position="239"/>
        <end position="249"/>
    </location>
</feature>
<feature type="helix" evidence="19">
    <location>
        <begin position="251"/>
        <end position="253"/>
    </location>
</feature>
<feature type="helix" evidence="19">
    <location>
        <begin position="254"/>
        <end position="267"/>
    </location>
</feature>
<feature type="turn" evidence="19">
    <location>
        <begin position="280"/>
        <end position="282"/>
    </location>
</feature>
<feature type="strand" evidence="19">
    <location>
        <begin position="288"/>
        <end position="290"/>
    </location>
</feature>
<feature type="strand" evidence="19">
    <location>
        <begin position="302"/>
        <end position="309"/>
    </location>
</feature>
<feature type="helix" evidence="19">
    <location>
        <begin position="310"/>
        <end position="312"/>
    </location>
</feature>
<feature type="helix" evidence="19">
    <location>
        <begin position="320"/>
        <end position="330"/>
    </location>
</feature>
<feature type="strand" evidence="19">
    <location>
        <begin position="332"/>
        <end position="340"/>
    </location>
</feature>
<feature type="helix" evidence="19">
    <location>
        <begin position="357"/>
        <end position="368"/>
    </location>
</feature>
<feature type="strand" evidence="19">
    <location>
        <begin position="372"/>
        <end position="379"/>
    </location>
</feature>
<feature type="strand" evidence="19">
    <location>
        <begin position="381"/>
        <end position="383"/>
    </location>
</feature>
<feature type="helix" evidence="19">
    <location>
        <begin position="387"/>
        <end position="395"/>
    </location>
</feature>
<feature type="helix" evidence="19">
    <location>
        <begin position="400"/>
        <end position="402"/>
    </location>
</feature>
<feature type="strand" evidence="19">
    <location>
        <begin position="404"/>
        <end position="412"/>
    </location>
</feature>
<feature type="strand" evidence="19">
    <location>
        <begin position="421"/>
        <end position="423"/>
    </location>
</feature>
<feature type="strand" evidence="19">
    <location>
        <begin position="425"/>
        <end position="427"/>
    </location>
</feature>
<feature type="strand" evidence="19">
    <location>
        <begin position="431"/>
        <end position="433"/>
    </location>
</feature>
<feature type="strand" evidence="19">
    <location>
        <begin position="435"/>
        <end position="443"/>
    </location>
</feature>
<feature type="strand" evidence="19">
    <location>
        <begin position="445"/>
        <end position="447"/>
    </location>
</feature>
<feature type="turn" evidence="19">
    <location>
        <begin position="448"/>
        <end position="452"/>
    </location>
</feature>
<feature type="strand" evidence="19">
    <location>
        <begin position="453"/>
        <end position="461"/>
    </location>
</feature>
<feature type="helix" evidence="19">
    <location>
        <begin position="473"/>
        <end position="485"/>
    </location>
</feature>
<feature type="strand" evidence="19">
    <location>
        <begin position="486"/>
        <end position="492"/>
    </location>
</feature>
<feature type="turn" evidence="19">
    <location>
        <begin position="493"/>
        <end position="495"/>
    </location>
</feature>
<feature type="strand" evidence="19">
    <location>
        <begin position="498"/>
        <end position="501"/>
    </location>
</feature>
<proteinExistence type="evidence at protein level"/>
<accession>Q96BZ4</accession>
<accession>Q6UWD2</accession>
<gene>
    <name evidence="11 17" type="primary">PLD4</name>
    <name type="synonym">C14orf175</name>
    <name type="ORF">UNQ2488/PRO5775</name>
</gene>
<protein>
    <recommendedName>
        <fullName evidence="12">5'-3' exonuclease PLD4</fullName>
        <ecNumber evidence="1">3.1.16.1</ecNumber>
    </recommendedName>
    <alternativeName>
        <fullName evidence="16">(S,S)-bis(monoacylglycero)phosphate synthase PLD4</fullName>
        <ecNumber evidence="10">3.1.4.-</ecNumber>
    </alternativeName>
    <alternativeName>
        <fullName>Phospholipase D family member 4</fullName>
    </alternativeName>
    <alternativeName>
        <fullName>Phospholipase D4</fullName>
    </alternativeName>
</protein>
<dbReference type="EC" id="3.1.16.1" evidence="1"/>
<dbReference type="EC" id="3.1.4.-" evidence="10"/>
<dbReference type="EMBL" id="AY358843">
    <property type="protein sequence ID" value="AAQ89202.1"/>
    <property type="status" value="ALT_INIT"/>
    <property type="molecule type" value="mRNA"/>
</dbReference>
<dbReference type="EMBL" id="BC015003">
    <property type="protein sequence ID" value="AAH15003.2"/>
    <property type="molecule type" value="mRNA"/>
</dbReference>
<dbReference type="CCDS" id="CCDS9995.2"/>
<dbReference type="RefSeq" id="NP_620145.2">
    <property type="nucleotide sequence ID" value="NM_138790.5"/>
</dbReference>
<dbReference type="PDB" id="8V08">
    <property type="method" value="X-ray"/>
    <property type="resolution" value="3.00 A"/>
    <property type="chains" value="A/B=60-506"/>
</dbReference>
<dbReference type="PDBsum" id="8V08"/>
<dbReference type="SMR" id="Q96BZ4"/>
<dbReference type="BioGRID" id="125782">
    <property type="interactions" value="81"/>
</dbReference>
<dbReference type="FunCoup" id="Q96BZ4">
    <property type="interactions" value="219"/>
</dbReference>
<dbReference type="IntAct" id="Q96BZ4">
    <property type="interactions" value="1"/>
</dbReference>
<dbReference type="STRING" id="9606.ENSP00000438677"/>
<dbReference type="BindingDB" id="Q96BZ4"/>
<dbReference type="ChEMBL" id="CHEMBL4879501"/>
<dbReference type="GlyConnect" id="1605">
    <property type="glycosylation" value="8 N-Linked glycans (5 sites)"/>
</dbReference>
<dbReference type="GlyCosmos" id="Q96BZ4">
    <property type="glycosylation" value="9 sites, 9 glycans"/>
</dbReference>
<dbReference type="GlyGen" id="Q96BZ4">
    <property type="glycosylation" value="11 sites, 12 N-linked glycans (5 sites), 1 O-linked glycan (1 site)"/>
</dbReference>
<dbReference type="iPTMnet" id="Q96BZ4"/>
<dbReference type="PhosphoSitePlus" id="Q96BZ4"/>
<dbReference type="BioMuta" id="PLD4"/>
<dbReference type="DMDM" id="121944492"/>
<dbReference type="MassIVE" id="Q96BZ4"/>
<dbReference type="PaxDb" id="9606-ENSP00000376372"/>
<dbReference type="PeptideAtlas" id="Q96BZ4"/>
<dbReference type="ProteomicsDB" id="76132"/>
<dbReference type="Antibodypedia" id="28277">
    <property type="antibodies" value="179 antibodies from 26 providers"/>
</dbReference>
<dbReference type="DNASU" id="122618"/>
<dbReference type="Ensembl" id="ENST00000392593.9">
    <property type="protein sequence ID" value="ENSP00000376372.5"/>
    <property type="gene ID" value="ENSG00000166428.14"/>
</dbReference>
<dbReference type="GeneID" id="122618"/>
<dbReference type="KEGG" id="hsa:122618"/>
<dbReference type="MANE-Select" id="ENST00000392593.9">
    <property type="protein sequence ID" value="ENSP00000376372.5"/>
    <property type="RefSeq nucleotide sequence ID" value="NM_138790.5"/>
    <property type="RefSeq protein sequence ID" value="NP_620145.2"/>
</dbReference>
<dbReference type="UCSC" id="uc001ypu.2">
    <property type="organism name" value="human"/>
</dbReference>
<dbReference type="AGR" id="HGNC:23792"/>
<dbReference type="CTD" id="122618"/>
<dbReference type="DisGeNET" id="122618"/>
<dbReference type="GeneCards" id="PLD4"/>
<dbReference type="HGNC" id="HGNC:23792">
    <property type="gene designation" value="PLD4"/>
</dbReference>
<dbReference type="HPA" id="ENSG00000166428">
    <property type="expression patterns" value="Tissue enhanced (bone marrow, brain, lymphoid tissue)"/>
</dbReference>
<dbReference type="MIM" id="618488">
    <property type="type" value="gene"/>
</dbReference>
<dbReference type="neXtProt" id="NX_Q96BZ4"/>
<dbReference type="OpenTargets" id="ENSG00000166428"/>
<dbReference type="PharmGKB" id="PA134861676"/>
<dbReference type="VEuPathDB" id="HostDB:ENSG00000166428"/>
<dbReference type="eggNOG" id="KOG3603">
    <property type="taxonomic scope" value="Eukaryota"/>
</dbReference>
<dbReference type="GeneTree" id="ENSGT00950000183059"/>
<dbReference type="HOGENOM" id="CLU_027021_0_0_1"/>
<dbReference type="InParanoid" id="Q96BZ4"/>
<dbReference type="OrthoDB" id="1923775at2759"/>
<dbReference type="PAN-GO" id="Q96BZ4">
    <property type="GO annotations" value="6 GO annotations based on evolutionary models"/>
</dbReference>
<dbReference type="PhylomeDB" id="Q96BZ4"/>
<dbReference type="TreeFam" id="TF313378"/>
<dbReference type="PathwayCommons" id="Q96BZ4"/>
<dbReference type="Reactome" id="R-HSA-1483148">
    <property type="pathway name" value="Synthesis of PG"/>
</dbReference>
<dbReference type="Reactome" id="R-HSA-1855204">
    <property type="pathway name" value="Synthesis of IP3 and IP4 in the cytosol"/>
</dbReference>
<dbReference type="Reactome" id="R-HSA-2029485">
    <property type="pathway name" value="Role of phospholipids in phagocytosis"/>
</dbReference>
<dbReference type="BioGRID-ORCS" id="122618">
    <property type="hits" value="13 hits in 1147 CRISPR screens"/>
</dbReference>
<dbReference type="ChiTaRS" id="PLD4">
    <property type="organism name" value="human"/>
</dbReference>
<dbReference type="GenomeRNAi" id="122618"/>
<dbReference type="Pharos" id="Q96BZ4">
    <property type="development level" value="Tbio"/>
</dbReference>
<dbReference type="PRO" id="PR:Q96BZ4"/>
<dbReference type="Proteomes" id="UP000005640">
    <property type="component" value="Chromosome 14"/>
</dbReference>
<dbReference type="RNAct" id="Q96BZ4">
    <property type="molecule type" value="protein"/>
</dbReference>
<dbReference type="Bgee" id="ENSG00000166428">
    <property type="expression patterns" value="Expressed in granulocyte and 107 other cell types or tissues"/>
</dbReference>
<dbReference type="ExpressionAtlas" id="Q96BZ4">
    <property type="expression patterns" value="baseline and differential"/>
</dbReference>
<dbReference type="GO" id="GO:0005769">
    <property type="term" value="C:early endosome"/>
    <property type="evidence" value="ECO:0000250"/>
    <property type="project" value="UniProtKB"/>
</dbReference>
<dbReference type="GO" id="GO:0005783">
    <property type="term" value="C:endoplasmic reticulum"/>
    <property type="evidence" value="ECO:0000318"/>
    <property type="project" value="GO_Central"/>
</dbReference>
<dbReference type="GO" id="GO:0005789">
    <property type="term" value="C:endoplasmic reticulum membrane"/>
    <property type="evidence" value="ECO:0000250"/>
    <property type="project" value="UniProtKB"/>
</dbReference>
<dbReference type="GO" id="GO:0005764">
    <property type="term" value="C:lysosome"/>
    <property type="evidence" value="ECO:0007669"/>
    <property type="project" value="UniProtKB-SubCell"/>
</dbReference>
<dbReference type="GO" id="GO:0005634">
    <property type="term" value="C:nucleus"/>
    <property type="evidence" value="ECO:0000250"/>
    <property type="project" value="UniProtKB"/>
</dbReference>
<dbReference type="GO" id="GO:0045335">
    <property type="term" value="C:phagocytic vesicle"/>
    <property type="evidence" value="ECO:0000250"/>
    <property type="project" value="UniProtKB"/>
</dbReference>
<dbReference type="GO" id="GO:0032588">
    <property type="term" value="C:trans-Golgi network membrane"/>
    <property type="evidence" value="ECO:0000250"/>
    <property type="project" value="UniProtKB"/>
</dbReference>
<dbReference type="GO" id="GO:0045145">
    <property type="term" value="F:single-stranded DNA 5'-3' DNA exonuclease activity"/>
    <property type="evidence" value="ECO:0000250"/>
    <property type="project" value="UniProtKB"/>
</dbReference>
<dbReference type="GO" id="GO:0051649">
    <property type="term" value="P:establishment of localization in cell"/>
    <property type="evidence" value="ECO:0007669"/>
    <property type="project" value="Ensembl"/>
</dbReference>
<dbReference type="GO" id="GO:0002244">
    <property type="term" value="P:hematopoietic progenitor cell differentiation"/>
    <property type="evidence" value="ECO:0000318"/>
    <property type="project" value="GO_Central"/>
</dbReference>
<dbReference type="GO" id="GO:0006954">
    <property type="term" value="P:inflammatory response"/>
    <property type="evidence" value="ECO:0007669"/>
    <property type="project" value="UniProtKB-KW"/>
</dbReference>
<dbReference type="GO" id="GO:0045087">
    <property type="term" value="P:innate immune response"/>
    <property type="evidence" value="ECO:0007669"/>
    <property type="project" value="UniProtKB-KW"/>
</dbReference>
<dbReference type="GO" id="GO:0006629">
    <property type="term" value="P:lipid metabolic process"/>
    <property type="evidence" value="ECO:0007669"/>
    <property type="project" value="UniProtKB-KW"/>
</dbReference>
<dbReference type="GO" id="GO:0006909">
    <property type="term" value="P:phagocytosis"/>
    <property type="evidence" value="ECO:0000250"/>
    <property type="project" value="UniProtKB"/>
</dbReference>
<dbReference type="GO" id="GO:1900015">
    <property type="term" value="P:regulation of cytokine production involved in inflammatory response"/>
    <property type="evidence" value="ECO:0000250"/>
    <property type="project" value="UniProtKB"/>
</dbReference>
<dbReference type="CDD" id="cd09148">
    <property type="entry name" value="PLDc_vPLD4_2"/>
    <property type="match status" value="1"/>
</dbReference>
<dbReference type="FunFam" id="3.30.870.10:FF:000013">
    <property type="entry name" value="phospholipase D3 isoform X1"/>
    <property type="match status" value="1"/>
</dbReference>
<dbReference type="FunFam" id="3.30.870.10:FF:000019">
    <property type="entry name" value="phospholipase D3 isoform X1"/>
    <property type="match status" value="1"/>
</dbReference>
<dbReference type="Gene3D" id="3.30.870.10">
    <property type="entry name" value="Endonuclease Chain A"/>
    <property type="match status" value="2"/>
</dbReference>
<dbReference type="InterPro" id="IPR050874">
    <property type="entry name" value="Diverse_PLD-related"/>
</dbReference>
<dbReference type="InterPro" id="IPR032803">
    <property type="entry name" value="PLDc_3"/>
</dbReference>
<dbReference type="InterPro" id="IPR001736">
    <property type="entry name" value="PLipase_D/transphosphatidylase"/>
</dbReference>
<dbReference type="PANTHER" id="PTHR10185:SF8">
    <property type="entry name" value="5'-3' EXONUCLEASE PLD4"/>
    <property type="match status" value="1"/>
</dbReference>
<dbReference type="PANTHER" id="PTHR10185">
    <property type="entry name" value="PHOSPHOLIPASE D - RELATED"/>
    <property type="match status" value="1"/>
</dbReference>
<dbReference type="Pfam" id="PF13918">
    <property type="entry name" value="PLDc_3"/>
    <property type="match status" value="1"/>
</dbReference>
<dbReference type="SMART" id="SM00155">
    <property type="entry name" value="PLDc"/>
    <property type="match status" value="2"/>
</dbReference>
<dbReference type="SUPFAM" id="SSF56024">
    <property type="entry name" value="Phospholipase D/nuclease"/>
    <property type="match status" value="2"/>
</dbReference>
<dbReference type="PROSITE" id="PS50035">
    <property type="entry name" value="PLD"/>
    <property type="match status" value="2"/>
</dbReference>
<sequence length="506" mass="55626">MLKPLWKAAVAPTWPCSMPPRRPWDREAGTLQVLGALAVLWLGSVALICLLWQVPRPPTWGQVQPKDVPRSWEHGSSPAWEPLEAEARQQRDSCQLVLVESIPQDLPSAAGSPSAQPLGQAWLQLLDTAQESVHVASYYWSLTGPDIGVNDSSSQLGEALLQKLQQLLGRNISLAVATSSPTLARTSTDLQVLAARGAHVRQVPMGRLTRGVLHSKFWVVDGRHIYMGSANMDWRSLTQVKELGAVIYNCSHLAQDLEKTFQTYWVLGVPKAVLPKTWPQNFSSHFNRFQPFHGLFDGVPTTAYFSASPPALCPQGRTRDLEALLAVMGSAQEFIYASVMEYFPTTRFSHPPRYWPVLDNALRAAAFGKGVRVRLLVGCGLNTDPTMFPYLRSLQALSNPAANVSVDVKVFIVPVGNHSNIPFSRVNHSKFMVTEKAAYIGTSNWSEDYFSSTAGVGLVVTQSPGAQPAGATVQEQLRQLFERDWSSRYAVGLDGQAPGQDCVWQG</sequence>
<comment type="function">
    <text evidence="2 6 7 8 9 10">5'-&gt;3' exonuclease that hydrolyzes the phosphodiester bond of single-stranded DNA (ssDNA) and RNA molecules to form nucleoside 3'-monophosphates and 5'-end 5'-hydroxy deoxyribonucleotide/ribonucleotide fragments (PubMed:30111894, PubMed:34620855, PubMed:38537643, PubMed:39423811). Partially redundant with PLD3, can cleave all four nucleotides displaying higher efficiency for ssDNA and RNA fragments initiated with uridine and guanosine residues and lower efficiency for cytidine-initiated substrates (PubMed:30111894, PubMed:34620855, PubMed:38537643, PubMed:39423811). As a result, it does not always degrade polynucleotides to the single nucleotide level, it can stall at specific sites sparing certain fragments from exonucleolytic degradation (PubMed:30111894, PubMed:34620855, PubMed:38537643, PubMed:39423811). Processes self and pathogenic ssDNA and RNA molecules that reach the endolysosomal compartment via phagocytosis or autophagy and may serve as 'danger' signals for recognition by innate immune receptors such as toll-like receptors (TLRs) (PubMed:38697119). Degrades mitochondrial CpG-rich ssDNA fragments to prevent TLR9 activation and autoinflammatory response, but it can cleave viral RNA to generate ligands for TLR7 activation and initiate antiviral immune responses (PubMed:38697119). In plasmacytoid dendritic cells, it cooperates with endonuclease RNASET2 to release 2',3'-cyclic guanosine monophosphate (2',3'-cGMP), a potent stimulatory ligand for TLR7 (PubMed:38697119). Produces 2',3'-cGMPs and cytidine-rich RNA fragments that occupy TLR7 ligand-binding pockets and trigger a signaling-competent state (PubMed:38697119). Can exert polynucleotide phosphatase activity toward 5'-phosphorylated ssDNA substrates although at a slow rate (PubMed:38537643). Transphosphatidylase that catalyzes the exchange with R to S stereo-inversion of the glycerol moiety between (S,R)-lysophosphatidylglycerol (LPG) and monoacylglycerol (MAG) substrates to yield (S,S)-bis(monoacylglycero)phosphate (BMP) (PubMed:39423811). Can synthesize a variety of (S,S)-BMPs representing the main phospholipid constituent of lysosomal intralumenal vesicle (ILV) membranes that bind acid hydrolases for lipid degradation (PubMed:39423811). Regulates the homeostasis and interorganellar communication of the endolysosomal system with an overall impact on cellular removal of dysfunctional organelles via autophagy as well as proper protein and lipid turnover. May play a role in myotube formation in response to ER stress (By similarity).</text>
</comment>
<comment type="catalytic activity">
    <reaction evidence="6 7 8 9">
        <text>Exonucleolytic cleavage in the 5'- to 3'-direction to yield nucleoside 3'-phosphates.</text>
        <dbReference type="EC" id="3.1.16.1"/>
    </reaction>
</comment>
<comment type="catalytic activity">
    <reaction evidence="7">
        <text>a 5'-end 5'-dephospho-ribonucleotidyl-ribonucleotide-RNA + H2O = a ribonucleoside 3'-phosphate + a 5'-end dephospho-ribonucleoside-RNA + H(+)</text>
        <dbReference type="Rhea" id="RHEA:81375"/>
        <dbReference type="Rhea" id="RHEA-COMP:13936"/>
        <dbReference type="Rhea" id="RHEA-COMP:19670"/>
        <dbReference type="ChEBI" id="CHEBI:13197"/>
        <dbReference type="ChEBI" id="CHEBI:15377"/>
        <dbReference type="ChEBI" id="CHEBI:15378"/>
        <dbReference type="ChEBI" id="CHEBI:138284"/>
        <dbReference type="ChEBI" id="CHEBI:231871"/>
    </reaction>
    <physiologicalReaction direction="left-to-right" evidence="14">
        <dbReference type="Rhea" id="RHEA:81376"/>
    </physiologicalReaction>
</comment>
<comment type="catalytic activity">
    <reaction evidence="9">
        <text>a ribonucleoside 3'-phosphate-2'-3'-cyclophospho-GMP + H2O = a ribonucleoside 3'-phosphate + 2',3'-cyclophospho-GMP + H(+)</text>
        <dbReference type="Rhea" id="RHEA:81319"/>
        <dbReference type="ChEBI" id="CHEBI:13197"/>
        <dbReference type="ChEBI" id="CHEBI:15377"/>
        <dbReference type="ChEBI" id="CHEBI:15378"/>
        <dbReference type="ChEBI" id="CHEBI:60837"/>
        <dbReference type="ChEBI" id="CHEBI:231870"/>
    </reaction>
    <physiologicalReaction direction="left-to-right" evidence="9">
        <dbReference type="Rhea" id="RHEA:81320"/>
    </physiologicalReaction>
</comment>
<comment type="catalytic activity">
    <reaction evidence="6 8">
        <text>a 5'-end 5'-dephospho-2'-deoxyribonucleotidyl-2'-deoxyribonucleotide in single-stranded DNA + H2O = a 5'-end dephospho-2'-deoxyribonucleoside in single-stranded DNA + a 2'-deoxyribonucleoside 3'-phosphate + H(+)</text>
        <dbReference type="Rhea" id="RHEA:81379"/>
        <dbReference type="Rhea" id="RHEA-COMP:19701"/>
        <dbReference type="Rhea" id="RHEA-COMP:19702"/>
        <dbReference type="ChEBI" id="CHEBI:15377"/>
        <dbReference type="ChEBI" id="CHEBI:15378"/>
        <dbReference type="ChEBI" id="CHEBI:131705"/>
        <dbReference type="ChEBI" id="CHEBI:136416"/>
        <dbReference type="ChEBI" id="CHEBI:231873"/>
    </reaction>
    <physiologicalReaction direction="left-to-right" evidence="13 14 15">
        <dbReference type="Rhea" id="RHEA:81380"/>
    </physiologicalReaction>
</comment>
<comment type="catalytic activity">
    <reaction evidence="8">
        <text>a 5'-end 5'-phospho-2'-deoxyribonucleotide in single-stranded DNA + H2O = a 5'-end 5'-dephospho-2'-deoxyribonucleotide in single-stranded DNA + phosphate</text>
        <dbReference type="Rhea" id="RHEA:82335"/>
        <dbReference type="Rhea" id="RHEA-COMP:19868"/>
        <dbReference type="Rhea" id="RHEA-COMP:19869"/>
        <dbReference type="ChEBI" id="CHEBI:15377"/>
        <dbReference type="ChEBI" id="CHEBI:43474"/>
        <dbReference type="ChEBI" id="CHEBI:136412"/>
        <dbReference type="ChEBI" id="CHEBI:136416"/>
    </reaction>
    <physiologicalReaction direction="left-to-right" evidence="15">
        <dbReference type="Rhea" id="RHEA:82336"/>
    </physiologicalReaction>
</comment>
<comment type="catalytic activity">
    <reaction evidence="10">
        <text>a 3-lyso-sn-glycero-1-phospho-(3'-acyl-1'-sn-glycerol) + a 1-acyl-sn-glycerol = a 3-acyl-sn-glycero-1-phospho-(3'-acyl-1'-sn-glycerol) + glycerol</text>
        <dbReference type="Rhea" id="RHEA:82563"/>
        <dbReference type="ChEBI" id="CHEBI:17754"/>
        <dbReference type="ChEBI" id="CHEBI:64683"/>
        <dbReference type="ChEBI" id="CHEBI:77717"/>
        <dbReference type="ChEBI" id="CHEBI:232393"/>
    </reaction>
    <physiologicalReaction direction="left-to-right" evidence="16">
        <dbReference type="Rhea" id="RHEA:82564"/>
    </physiologicalReaction>
</comment>
<comment type="catalytic activity">
    <reaction evidence="10">
        <text>3-lyso-sn-glycero-1-phospho-(3'-(9Z-octadecenoyl)-1'-sn-glycerol) + 1-(9Z-octadecenoyl)-sn-glycerol = 3-(9Z-octadecenoyl)-sn-glycero-1-phospho-(3'-(9Z-octadecenoyl)-1'-sn-glycerol) + glycerol</text>
        <dbReference type="Rhea" id="RHEA:82567"/>
        <dbReference type="ChEBI" id="CHEBI:17754"/>
        <dbReference type="ChEBI" id="CHEBI:75757"/>
        <dbReference type="ChEBI" id="CHEBI:139150"/>
        <dbReference type="ChEBI" id="CHEBI:232394"/>
    </reaction>
    <physiologicalReaction direction="left-to-right" evidence="16">
        <dbReference type="Rhea" id="RHEA:82568"/>
    </physiologicalReaction>
</comment>
<comment type="activity regulation">
    <text evidence="8">The exonuclease activity toward ssDNA substrate is Ca(2+) and Mg(2+)-independent, but it is inhibited by Fe(2+), Cu(2+) and to a lesser extent Zn(2+) ions.</text>
</comment>
<comment type="biophysicochemical properties">
    <phDependence>
        <text evidence="8">Optimally active at acidic pHs.</text>
    </phDependence>
</comment>
<comment type="subunit">
    <text evidence="9">Homodimer.</text>
</comment>
<comment type="subcellular location">
    <subcellularLocation>
        <location evidence="1">Endoplasmic reticulum membrane</location>
        <topology evidence="1">Single-pass type II membrane protein</topology>
    </subcellularLocation>
    <subcellularLocation>
        <location evidence="1">Golgi apparatus</location>
        <location evidence="1">trans-Golgi network membrane</location>
        <topology evidence="1">Single-pass type II membrane protein</topology>
    </subcellularLocation>
    <subcellularLocation>
        <location evidence="1">Nucleus</location>
    </subcellularLocation>
    <subcellularLocation>
        <location evidence="1">Early endosome</location>
    </subcellularLocation>
    <subcellularLocation>
        <location evidence="1">Cytoplasmic vesicle</location>
        <location evidence="1">Phagosome</location>
    </subcellularLocation>
    <subcellularLocation>
        <location evidence="10">Lysosome</location>
    </subcellularLocation>
    <text evidence="1">Activation of microglia induces translocation of PLD4 from the nucleus to the phagosomes.</text>
</comment>
<comment type="tissue specificity">
    <text evidence="9">Expressed in plasmacytoid dendritic cells and monocytes (at protein level).</text>
</comment>
<comment type="domain">
    <text evidence="8">The catalytic domain contains two conserved PLD phosphodiesterase HxK(x4)D(E) motifs that accomodate the phosphate group of the nucleic acid substrates, with one nucleophile histidine residue forming a phosphohistidine intermediate and the other histidine protonating the leaving 5'-OH ssDNA/RNA fragment, resulting in the cleavage of the phosphodiester bond. The homodimer has two independent catalytic domains arranged at the dimer interface.</text>
</comment>
<comment type="PTM">
    <text evidence="1">Highly N-glycosylated.</text>
</comment>
<comment type="similarity">
    <text evidence="12">Belongs to the phospholipase D family.</text>
</comment>
<comment type="caution">
    <text evidence="1">Exhibits no phospholipase activity, despite two HKD motifs.</text>
</comment>
<comment type="sequence caution" evidence="12">
    <conflict type="erroneous initiation">
        <sequence resource="EMBL-CDS" id="AAQ89202"/>
    </conflict>
</comment>
<reference key="1">
    <citation type="journal article" date="2003" name="Genome Res.">
        <title>The secreted protein discovery initiative (SPDI), a large-scale effort to identify novel human secreted and transmembrane proteins: a bioinformatics assessment.</title>
        <authorList>
            <person name="Clark H.F."/>
            <person name="Gurney A.L."/>
            <person name="Abaya E."/>
            <person name="Baker K."/>
            <person name="Baldwin D.T."/>
            <person name="Brush J."/>
            <person name="Chen J."/>
            <person name="Chow B."/>
            <person name="Chui C."/>
            <person name="Crowley C."/>
            <person name="Currell B."/>
            <person name="Deuel B."/>
            <person name="Dowd P."/>
            <person name="Eaton D."/>
            <person name="Foster J.S."/>
            <person name="Grimaldi C."/>
            <person name="Gu Q."/>
            <person name="Hass P.E."/>
            <person name="Heldens S."/>
            <person name="Huang A."/>
            <person name="Kim H.S."/>
            <person name="Klimowski L."/>
            <person name="Jin Y."/>
            <person name="Johnson S."/>
            <person name="Lee J."/>
            <person name="Lewis L."/>
            <person name="Liao D."/>
            <person name="Mark M.R."/>
            <person name="Robbie E."/>
            <person name="Sanchez C."/>
            <person name="Schoenfeld J."/>
            <person name="Seshagiri S."/>
            <person name="Simmons L."/>
            <person name="Singh J."/>
            <person name="Smith V."/>
            <person name="Stinson J."/>
            <person name="Vagts A."/>
            <person name="Vandlen R.L."/>
            <person name="Watanabe C."/>
            <person name="Wieand D."/>
            <person name="Woods K."/>
            <person name="Xie M.-H."/>
            <person name="Yansura D.G."/>
            <person name="Yi S."/>
            <person name="Yu G."/>
            <person name="Yuan J."/>
            <person name="Zhang M."/>
            <person name="Zhang Z."/>
            <person name="Goddard A.D."/>
            <person name="Wood W.I."/>
            <person name="Godowski P.J."/>
            <person name="Gray A.M."/>
        </authorList>
    </citation>
    <scope>NUCLEOTIDE SEQUENCE [LARGE SCALE MRNA]</scope>
</reference>
<reference key="2">
    <citation type="journal article" date="2004" name="Genome Res.">
        <title>The status, quality, and expansion of the NIH full-length cDNA project: the Mammalian Gene Collection (MGC).</title>
        <authorList>
            <consortium name="The MGC Project Team"/>
        </authorList>
    </citation>
    <scope>NUCLEOTIDE SEQUENCE [LARGE SCALE MRNA]</scope>
    <source>
        <tissue>B-cell</tissue>
    </source>
</reference>
<reference key="3">
    <citation type="journal article" date="2018" name="Nat. Immunol.">
        <title>PLD3 and PLD4 are single-stranded acid exonucleases that regulate endosomal nucleic-acid sensing.</title>
        <authorList>
            <person name="Gavin A.L."/>
            <person name="Huang D."/>
            <person name="Huber C."/>
            <person name="Maartensson A."/>
            <person name="Tardif V."/>
            <person name="Skog P.D."/>
            <person name="Blane T.R."/>
            <person name="Thinnes T.C."/>
            <person name="Osborn K."/>
            <person name="Chong H.S."/>
            <person name="Kargaran F."/>
            <person name="Kimm P."/>
            <person name="Zeitjian A."/>
            <person name="Sielski R.L."/>
            <person name="Briggs M."/>
            <person name="Schulz S.R."/>
            <person name="Zarpellon A."/>
            <person name="Cravatt B."/>
            <person name="Pang E.S."/>
            <person name="Teijaro J."/>
            <person name="de la Torre J.C."/>
            <person name="O'Keeffe M."/>
            <person name="Hochrein H."/>
            <person name="Damme M."/>
            <person name="Teyton L."/>
            <person name="Lawson B.R."/>
            <person name="Nemazee D."/>
        </authorList>
    </citation>
    <scope>FUNCTION</scope>
    <scope>CATALYTIC ACTIVITY</scope>
</reference>
<reference key="4">
    <citation type="journal article" date="2021" name="Nat. Commun.">
        <title>Cleavage of DNA and RNA by PLD3 and PLD4 limits autoinflammatory triggering by multiple sensors.</title>
        <authorList>
            <person name="Gavin A.L."/>
            <person name="Huang D."/>
            <person name="Blane T.R."/>
            <person name="Thinnes T.C."/>
            <person name="Murakami Y."/>
            <person name="Fukui R."/>
            <person name="Miyake K."/>
            <person name="Nemazee D."/>
        </authorList>
    </citation>
    <scope>FUNCTION</scope>
    <scope>CATALYTIC ACTIVITY</scope>
</reference>
<reference key="5">
    <citation type="journal article" date="2024" name="Immunity">
        <title>Lysosomal endonuclease RNase T2 and PLD exonucleases cooperatively generate RNA ligands for TLR7 activation.</title>
        <authorList>
            <person name="Berouti M."/>
            <person name="Lammens K."/>
            <person name="Heiss M."/>
            <person name="Hansbauer L."/>
            <person name="Bauernfried S."/>
            <person name="Stoeckl J."/>
            <person name="Pinci F."/>
            <person name="Piseddu I."/>
            <person name="Greulich W."/>
            <person name="Wang M."/>
            <person name="Jung C."/>
            <person name="Froehlich T."/>
            <person name="Carell T."/>
            <person name="Hopfner K.P."/>
            <person name="Hornung V."/>
        </authorList>
    </citation>
    <scope>FUNCTION</scope>
    <scope>CATALYTIC ACTIVITY</scope>
    <scope>TISSUE SPECIFICITY</scope>
    <scope>SUBUNIT</scope>
</reference>
<reference key="6">
    <citation type="journal article" date="2024" name="Cell">
        <title>PLD3 and PLD4 synthesize S,S-BMP, a key phospholipid enabling lipid degradation in lysosomes.</title>
        <authorList>
            <person name="Singh S."/>
            <person name="Dransfeld U.E."/>
            <person name="Ambaw Y.A."/>
            <person name="Lopez-Scarim J."/>
            <person name="Farese R.V. Jr."/>
            <person name="Walther T.C."/>
        </authorList>
    </citation>
    <scope>FUNCTION</scope>
    <scope>CATALYTIC ACTIVITY</scope>
    <scope>SUBCELLULAR LOCATION</scope>
    <scope>MUTAGENESIS OF HIS-214; LYS-216; ASP-221; VAL-426; HIS-428 AND GLU-435</scope>
</reference>
<reference evidence="18" key="7">
    <citation type="journal article" date="2024" name="Structure">
        <title>Structural and mechanistic insights into disease-associated endolysosomal exonucleases PLD3 and PLD4.</title>
        <authorList>
            <person name="Yuan M."/>
            <person name="Peng L."/>
            <person name="Huang D."/>
            <person name="Gavin A."/>
            <person name="Luan F."/>
            <person name="Tran J."/>
            <person name="Feng Z."/>
            <person name="Zhu X."/>
            <person name="Matteson J."/>
            <person name="Wilson I.A."/>
            <person name="Nemazee D."/>
        </authorList>
    </citation>
    <scope>X-RAY CRYSTALLOGRAPHY (3.00 ANGSTROMS) OF 60-506</scope>
    <scope>DISULFIDE BOND</scope>
    <scope>ACTIVE SITE</scope>
    <scope>SUBUNIT</scope>
    <scope>FUNCTION</scope>
    <scope>CATALYTIC ACTIVITY</scope>
    <scope>ACTIVITY REGULATION</scope>
    <scope>BIOPHYSICOCHEMICAL PROPERTIES</scope>
    <scope>MUTAGENESIS OF LEU-183; VAL-212; HIS-214; ASP-221; ARG-235; HIS-252; GLN-255; SER-283; ALA-326; PHE-348; GLY-368; HIS-428; GLU-435 AND ALA-497</scope>
</reference>
<evidence type="ECO:0000250" key="1">
    <source>
        <dbReference type="UniProtKB" id="Q8BG07"/>
    </source>
</evidence>
<evidence type="ECO:0000250" key="2">
    <source>
        <dbReference type="UniProtKB" id="Q8IV08"/>
    </source>
</evidence>
<evidence type="ECO:0000255" key="3"/>
<evidence type="ECO:0000255" key="4">
    <source>
        <dbReference type="PROSITE-ProRule" id="PRU00153"/>
    </source>
</evidence>
<evidence type="ECO:0000255" key="5">
    <source>
        <dbReference type="PROSITE-ProRule" id="PRU00498"/>
    </source>
</evidence>
<evidence type="ECO:0000269" key="6">
    <source>
    </source>
</evidence>
<evidence type="ECO:0000269" key="7">
    <source>
    </source>
</evidence>
<evidence type="ECO:0000269" key="8">
    <source>
    </source>
</evidence>
<evidence type="ECO:0000269" key="9">
    <source>
    </source>
</evidence>
<evidence type="ECO:0000269" key="10">
    <source>
    </source>
</evidence>
<evidence type="ECO:0000303" key="11">
    <source>
    </source>
</evidence>
<evidence type="ECO:0000305" key="12"/>
<evidence type="ECO:0000305" key="13">
    <source>
    </source>
</evidence>
<evidence type="ECO:0000305" key="14">
    <source>
    </source>
</evidence>
<evidence type="ECO:0000305" key="15">
    <source>
    </source>
</evidence>
<evidence type="ECO:0000305" key="16">
    <source>
    </source>
</evidence>
<evidence type="ECO:0000312" key="17">
    <source>
        <dbReference type="HGNC" id="HGNC:23792"/>
    </source>
</evidence>
<evidence type="ECO:0007744" key="18">
    <source>
        <dbReference type="PDB" id="8V08"/>
    </source>
</evidence>
<evidence type="ECO:0007829" key="19">
    <source>
        <dbReference type="PDB" id="8V08"/>
    </source>
</evidence>
<organism>
    <name type="scientific">Homo sapiens</name>
    <name type="common">Human</name>
    <dbReference type="NCBI Taxonomy" id="9606"/>
    <lineage>
        <taxon>Eukaryota</taxon>
        <taxon>Metazoa</taxon>
        <taxon>Chordata</taxon>
        <taxon>Craniata</taxon>
        <taxon>Vertebrata</taxon>
        <taxon>Euteleostomi</taxon>
        <taxon>Mammalia</taxon>
        <taxon>Eutheria</taxon>
        <taxon>Euarchontoglires</taxon>
        <taxon>Primates</taxon>
        <taxon>Haplorrhini</taxon>
        <taxon>Catarrhini</taxon>
        <taxon>Hominidae</taxon>
        <taxon>Homo</taxon>
    </lineage>
</organism>
<name>PLD4_HUMAN</name>